<keyword id="KW-0903">Direct protein sequencing</keyword>
<keyword id="KW-0378">Hydrolase</keyword>
<keyword id="KW-0479">Metal-binding</keyword>
<keyword id="KW-0597">Phosphoprotein</keyword>
<keyword id="KW-1185">Reference proteome</keyword>
<keyword id="KW-0862">Zinc</keyword>
<sequence>MAPQERLLIRGGRVVNDDFSQVADVLVEDGVVRALGRDLLPPGDTSRGLRILDAAGKLVLPGGIDTHTHMQFPFMGSQSVDDFHQGTKAALAGGTTMIIDFAIPQKGSSLIEAFETWRNWADPKVCCDYSLHVAVTWWSDKVKEEMKTLAQDKGVNSFKMFMAYKDLYMVQDQQMYAAFSQCKEIGAIAQVHAENGDLIAEGAKKMLALGITGPEGHELCRPEAVEAEATLRAITIASAVNCPLYIVHVMSKSAAKVIADAKREGKVVYGEPIAAGLGTDGTQYWNKEWRHAAHHVMGPPLRPDPSTPGFLMNLLANGDLTTTGSDNCTFNTCQKALGKDDFTKIPNGVNGVEDRMSVIWEKGVHSGKMDENRFVAVTSTNAAKIFNLYPKKGRIAVGSDADIVIWDPEATRTISAKTHHQAVNFNIFEGMVCHGVPLVTISRGRVVYEAGVFDVTAGHGKFIPRQPFAEFIYKRVKQRDQTCTPIPVKRAPYKGEVITLKPRETKEDDTAGTRMQGHS</sequence>
<name>DPYS_RAT</name>
<organism>
    <name type="scientific">Rattus norvegicus</name>
    <name type="common">Rat</name>
    <dbReference type="NCBI Taxonomy" id="10116"/>
    <lineage>
        <taxon>Eukaryota</taxon>
        <taxon>Metazoa</taxon>
        <taxon>Chordata</taxon>
        <taxon>Craniata</taxon>
        <taxon>Vertebrata</taxon>
        <taxon>Euteleostomi</taxon>
        <taxon>Mammalia</taxon>
        <taxon>Eutheria</taxon>
        <taxon>Euarchontoglires</taxon>
        <taxon>Glires</taxon>
        <taxon>Rodentia</taxon>
        <taxon>Myomorpha</taxon>
        <taxon>Muroidea</taxon>
        <taxon>Muridae</taxon>
        <taxon>Murinae</taxon>
        <taxon>Rattus</taxon>
    </lineage>
</organism>
<evidence type="ECO:0000250" key="1"/>
<evidence type="ECO:0000250" key="2">
    <source>
        <dbReference type="UniProtKB" id="Q14117"/>
    </source>
</evidence>
<evidence type="ECO:0000250" key="3">
    <source>
        <dbReference type="UniProtKB" id="Q55DL0"/>
    </source>
</evidence>
<evidence type="ECO:0000250" key="4">
    <source>
        <dbReference type="UniProtKB" id="Q9EQF5"/>
    </source>
</evidence>
<evidence type="ECO:0000250" key="5">
    <source>
        <dbReference type="UniProtKB" id="Q9EQF6"/>
    </source>
</evidence>
<evidence type="ECO:0000250" key="6">
    <source>
        <dbReference type="UniProtKB" id="Q9P903"/>
    </source>
</evidence>
<evidence type="ECO:0000305" key="7"/>
<gene>
    <name type="primary">Dpys</name>
</gene>
<protein>
    <recommendedName>
        <fullName>Dihydropyrimidinase</fullName>
        <shortName>DHP</shortName>
        <shortName>DHPase</shortName>
        <ecNumber evidence="3">3.5.2.2</ecNumber>
    </recommendedName>
    <alternativeName>
        <fullName>Dihydropyrimidine amidohydrolase</fullName>
    </alternativeName>
    <alternativeName>
        <fullName>Hydantoinase</fullName>
    </alternativeName>
</protein>
<feature type="chain" id="PRO_0000165908" description="Dihydropyrimidinase">
    <location>
        <begin position="1"/>
        <end position="519"/>
    </location>
</feature>
<feature type="binding site" evidence="6">
    <location>
        <position position="67"/>
    </location>
    <ligand>
        <name>Zn(2+)</name>
        <dbReference type="ChEBI" id="CHEBI:29105"/>
        <label>1</label>
    </ligand>
</feature>
<feature type="binding site" evidence="6">
    <location>
        <position position="69"/>
    </location>
    <ligand>
        <name>Zn(2+)</name>
        <dbReference type="ChEBI" id="CHEBI:29105"/>
        <label>1</label>
    </ligand>
</feature>
<feature type="binding site" description="via carbamate group" evidence="6">
    <location>
        <position position="159"/>
    </location>
    <ligand>
        <name>Zn(2+)</name>
        <dbReference type="ChEBI" id="CHEBI:29105"/>
        <label>1</label>
    </ligand>
</feature>
<feature type="binding site" description="via carbamate group" evidence="6">
    <location>
        <position position="159"/>
    </location>
    <ligand>
        <name>Zn(2+)</name>
        <dbReference type="ChEBI" id="CHEBI:29105"/>
        <label>2</label>
    </ligand>
</feature>
<feature type="binding site" evidence="6">
    <location>
        <position position="164"/>
    </location>
    <ligand>
        <name>substrate</name>
    </ligand>
</feature>
<feature type="binding site" evidence="6">
    <location>
        <position position="192"/>
    </location>
    <ligand>
        <name>Zn(2+)</name>
        <dbReference type="ChEBI" id="CHEBI:29105"/>
        <label>2</label>
    </ligand>
</feature>
<feature type="binding site" evidence="6">
    <location>
        <position position="248"/>
    </location>
    <ligand>
        <name>Zn(2+)</name>
        <dbReference type="ChEBI" id="CHEBI:29105"/>
        <label>2</label>
    </ligand>
</feature>
<feature type="binding site" evidence="6">
    <location>
        <position position="326"/>
    </location>
    <ligand>
        <name>Zn(2+)</name>
        <dbReference type="ChEBI" id="CHEBI:29105"/>
        <label>1</label>
    </ligand>
</feature>
<feature type="binding site" evidence="6">
    <location>
        <position position="347"/>
    </location>
    <ligand>
        <name>substrate</name>
    </ligand>
</feature>
<feature type="modified residue" description="Phosphoserine" evidence="2">
    <location>
        <position position="79"/>
    </location>
</feature>
<feature type="modified residue" description="N6-carboxylysine" evidence="6">
    <location>
        <position position="159"/>
    </location>
</feature>
<feature type="modified residue" description="N6-succinyllysine" evidence="4">
    <location>
        <position position="256"/>
    </location>
</feature>
<feature type="modified residue" description="Phosphothreonine" evidence="5">
    <location>
        <position position="510"/>
    </location>
</feature>
<feature type="sequence conflict" description="In Ref. 1; BAA09833." evidence="7" ref="1">
    <original>I</original>
    <variation>M</variation>
    <location>
        <position position="403"/>
    </location>
</feature>
<dbReference type="EC" id="3.5.2.2" evidence="3"/>
<dbReference type="EMBL" id="D63704">
    <property type="protein sequence ID" value="BAA09833.1"/>
    <property type="molecule type" value="mRNA"/>
</dbReference>
<dbReference type="EMBL" id="BC081768">
    <property type="protein sequence ID" value="AAH81768.1"/>
    <property type="molecule type" value="mRNA"/>
</dbReference>
<dbReference type="PIR" id="S70581">
    <property type="entry name" value="S70581"/>
</dbReference>
<dbReference type="RefSeq" id="NP_113893.2">
    <property type="nucleotide sequence ID" value="NM_031705.2"/>
</dbReference>
<dbReference type="RefSeq" id="XP_038935787.1">
    <property type="nucleotide sequence ID" value="XM_039079859.2"/>
</dbReference>
<dbReference type="RefSeq" id="XP_038935789.1">
    <property type="nucleotide sequence ID" value="XM_039079861.2"/>
</dbReference>
<dbReference type="SMR" id="Q63150"/>
<dbReference type="FunCoup" id="Q63150">
    <property type="interactions" value="744"/>
</dbReference>
<dbReference type="STRING" id="10116.ENSRNOP00000006004"/>
<dbReference type="MEROPS" id="M38.973"/>
<dbReference type="GlyGen" id="Q63150">
    <property type="glycosylation" value="1 site"/>
</dbReference>
<dbReference type="iPTMnet" id="Q63150"/>
<dbReference type="PhosphoSitePlus" id="Q63150"/>
<dbReference type="jPOST" id="Q63150"/>
<dbReference type="PaxDb" id="10116-ENSRNOP00000006004"/>
<dbReference type="Ensembl" id="ENSRNOT00000006004.4">
    <property type="protein sequence ID" value="ENSRNOP00000006004.1"/>
    <property type="gene ID" value="ENSRNOG00000004298.5"/>
</dbReference>
<dbReference type="GeneID" id="65135"/>
<dbReference type="KEGG" id="rno:65135"/>
<dbReference type="UCSC" id="RGD:68376">
    <property type="organism name" value="rat"/>
</dbReference>
<dbReference type="AGR" id="RGD:68376"/>
<dbReference type="CTD" id="1807"/>
<dbReference type="RGD" id="68376">
    <property type="gene designation" value="Dpys"/>
</dbReference>
<dbReference type="eggNOG" id="KOG2584">
    <property type="taxonomic scope" value="Eukaryota"/>
</dbReference>
<dbReference type="GeneTree" id="ENSGT01030000234527"/>
<dbReference type="HOGENOM" id="CLU_015572_2_2_1"/>
<dbReference type="InParanoid" id="Q63150"/>
<dbReference type="PhylomeDB" id="Q63150"/>
<dbReference type="TreeFam" id="TF314706"/>
<dbReference type="BioCyc" id="MetaCyc:MONOMER-15404"/>
<dbReference type="Reactome" id="R-RNO-73621">
    <property type="pathway name" value="Pyrimidine catabolism"/>
</dbReference>
<dbReference type="SABIO-RK" id="Q63150"/>
<dbReference type="PRO" id="PR:Q63150"/>
<dbReference type="Proteomes" id="UP000002494">
    <property type="component" value="Chromosome 7"/>
</dbReference>
<dbReference type="Bgee" id="ENSRNOG00000004298">
    <property type="expression patterns" value="Expressed in liver and 4 other cell types or tissues"/>
</dbReference>
<dbReference type="GO" id="GO:0005829">
    <property type="term" value="C:cytosol"/>
    <property type="evidence" value="ECO:0000314"/>
    <property type="project" value="UniProtKB"/>
</dbReference>
<dbReference type="GO" id="GO:0032991">
    <property type="term" value="C:protein-containing complex"/>
    <property type="evidence" value="ECO:0000314"/>
    <property type="project" value="UniProtKB"/>
</dbReference>
<dbReference type="GO" id="GO:0016597">
    <property type="term" value="F:amino acid binding"/>
    <property type="evidence" value="ECO:0000314"/>
    <property type="project" value="RGD"/>
</dbReference>
<dbReference type="GO" id="GO:0004157">
    <property type="term" value="F:dihydropyrimidinase activity"/>
    <property type="evidence" value="ECO:0000314"/>
    <property type="project" value="UniProtKB"/>
</dbReference>
<dbReference type="GO" id="GO:0042802">
    <property type="term" value="F:identical protein binding"/>
    <property type="evidence" value="ECO:0000353"/>
    <property type="project" value="UniProtKB"/>
</dbReference>
<dbReference type="GO" id="GO:0051219">
    <property type="term" value="F:phosphoprotein binding"/>
    <property type="evidence" value="ECO:0000266"/>
    <property type="project" value="RGD"/>
</dbReference>
<dbReference type="GO" id="GO:0002059">
    <property type="term" value="F:thymine binding"/>
    <property type="evidence" value="ECO:0000314"/>
    <property type="project" value="RGD"/>
</dbReference>
<dbReference type="GO" id="GO:0002058">
    <property type="term" value="F:uracil binding"/>
    <property type="evidence" value="ECO:0000314"/>
    <property type="project" value="RGD"/>
</dbReference>
<dbReference type="GO" id="GO:0008270">
    <property type="term" value="F:zinc ion binding"/>
    <property type="evidence" value="ECO:0000314"/>
    <property type="project" value="UniProtKB"/>
</dbReference>
<dbReference type="GO" id="GO:0019482">
    <property type="term" value="P:beta-alanine metabolic process"/>
    <property type="evidence" value="ECO:0000314"/>
    <property type="project" value="RGD"/>
</dbReference>
<dbReference type="GO" id="GO:0006248">
    <property type="term" value="P:CMP catabolic process"/>
    <property type="evidence" value="ECO:0000266"/>
    <property type="project" value="RGD"/>
</dbReference>
<dbReference type="GO" id="GO:0006249">
    <property type="term" value="P:dCMP catabolic process"/>
    <property type="evidence" value="ECO:0000266"/>
    <property type="project" value="RGD"/>
</dbReference>
<dbReference type="GO" id="GO:0046079">
    <property type="term" value="P:dUMP catabolic process"/>
    <property type="evidence" value="ECO:0000266"/>
    <property type="project" value="RGD"/>
</dbReference>
<dbReference type="GO" id="GO:0006208">
    <property type="term" value="P:pyrimidine nucleobase catabolic process"/>
    <property type="evidence" value="ECO:0000266"/>
    <property type="project" value="RGD"/>
</dbReference>
<dbReference type="GO" id="GO:0006210">
    <property type="term" value="P:thymine catabolic process"/>
    <property type="evidence" value="ECO:0000314"/>
    <property type="project" value="UniProtKB"/>
</dbReference>
<dbReference type="GO" id="GO:0046050">
    <property type="term" value="P:UMP catabolic process"/>
    <property type="evidence" value="ECO:0000266"/>
    <property type="project" value="RGD"/>
</dbReference>
<dbReference type="GO" id="GO:0006212">
    <property type="term" value="P:uracil catabolic process"/>
    <property type="evidence" value="ECO:0000314"/>
    <property type="project" value="UniProtKB"/>
</dbReference>
<dbReference type="GO" id="GO:0019860">
    <property type="term" value="P:uracil metabolic process"/>
    <property type="evidence" value="ECO:0000314"/>
    <property type="project" value="RGD"/>
</dbReference>
<dbReference type="CDD" id="cd01314">
    <property type="entry name" value="D-HYD"/>
    <property type="match status" value="1"/>
</dbReference>
<dbReference type="FunFam" id="3.20.20.140:FF:000076">
    <property type="entry name" value="Dihydropyrimidinase like 2"/>
    <property type="match status" value="1"/>
</dbReference>
<dbReference type="Gene3D" id="3.20.20.140">
    <property type="entry name" value="Metal-dependent hydrolases"/>
    <property type="match status" value="1"/>
</dbReference>
<dbReference type="Gene3D" id="2.30.40.10">
    <property type="entry name" value="Urease, subunit C, domain 1"/>
    <property type="match status" value="1"/>
</dbReference>
<dbReference type="InterPro" id="IPR006680">
    <property type="entry name" value="Amidohydro-rel"/>
</dbReference>
<dbReference type="InterPro" id="IPR011778">
    <property type="entry name" value="Hydantoinase/dihydroPyrase"/>
</dbReference>
<dbReference type="InterPro" id="IPR011059">
    <property type="entry name" value="Metal-dep_hydrolase_composite"/>
</dbReference>
<dbReference type="InterPro" id="IPR032466">
    <property type="entry name" value="Metal_Hydrolase"/>
</dbReference>
<dbReference type="InterPro" id="IPR050378">
    <property type="entry name" value="Metallo-dep_Hydrolases_sf"/>
</dbReference>
<dbReference type="NCBIfam" id="TIGR02033">
    <property type="entry name" value="D-hydantoinase"/>
    <property type="match status" value="1"/>
</dbReference>
<dbReference type="PANTHER" id="PTHR11647:SF50">
    <property type="entry name" value="DIHYDROPYRIMIDINASE"/>
    <property type="match status" value="1"/>
</dbReference>
<dbReference type="PANTHER" id="PTHR11647">
    <property type="entry name" value="HYDRANTOINASE/DIHYDROPYRIMIDINASE FAMILY MEMBER"/>
    <property type="match status" value="1"/>
</dbReference>
<dbReference type="Pfam" id="PF01979">
    <property type="entry name" value="Amidohydro_1"/>
    <property type="match status" value="1"/>
</dbReference>
<dbReference type="SUPFAM" id="SSF51338">
    <property type="entry name" value="Composite domain of metallo-dependent hydrolases"/>
    <property type="match status" value="2"/>
</dbReference>
<dbReference type="SUPFAM" id="SSF51556">
    <property type="entry name" value="Metallo-dependent hydrolases"/>
    <property type="match status" value="1"/>
</dbReference>
<comment type="function">
    <text>Catalyzes the second step of the reductive pyrimidine degradation, the reversible hydrolytic ring opening of dihydropyrimidines. Can catalyze the ring opening of 5,6-dihydrouracil to N-carbamyl-alanine and of 5,6-dihydrothymine to N-carbamyl-amino isobutyrate.</text>
</comment>
<comment type="catalytic activity">
    <reaction evidence="3">
        <text>5,6-dihydrouracil + H2O = 3-(carbamoylamino)propanoate + H(+)</text>
        <dbReference type="Rhea" id="RHEA:16121"/>
        <dbReference type="ChEBI" id="CHEBI:11892"/>
        <dbReference type="ChEBI" id="CHEBI:15377"/>
        <dbReference type="ChEBI" id="CHEBI:15378"/>
        <dbReference type="ChEBI" id="CHEBI:15901"/>
        <dbReference type="EC" id="3.5.2.2"/>
    </reaction>
</comment>
<comment type="cofactor">
    <cofactor evidence="3">
        <name>Zn(2+)</name>
        <dbReference type="ChEBI" id="CHEBI:29105"/>
    </cofactor>
    <text evidence="3">Binds 2 Zn(2+) ions per subunit.</text>
</comment>
<comment type="subunit">
    <text evidence="3">Homotetramer.</text>
</comment>
<comment type="PTM">
    <text evidence="1">Carboxylation allows a single lysine to coordinate two zinc ions.</text>
</comment>
<comment type="similarity">
    <text evidence="7">Belongs to the metallo-dependent hydrolases superfamily. Hydantoinase/dihydropyrimidinase family.</text>
</comment>
<proteinExistence type="evidence at protein level"/>
<accession>Q63150</accession>
<accession>Q642F0</accession>
<reference key="1">
    <citation type="journal article" date="1996" name="Biochim. Biophys. Acta">
        <title>Molecular cloning and sequencing of a cDNA encoding dihydropyrimidinase from the rat liver.</title>
        <authorList>
            <person name="Matsuda K."/>
            <person name="Sakata S."/>
            <person name="Kaneko M."/>
            <person name="Hamajima N."/>
            <person name="Nonaka M."/>
            <person name="Sasaki M."/>
            <person name="Tamaki N."/>
        </authorList>
    </citation>
    <scope>NUCLEOTIDE SEQUENCE [MRNA]</scope>
    <scope>PARTIAL PROTEIN SEQUENCE</scope>
    <source>
        <tissue>Liver</tissue>
    </source>
</reference>
<reference key="2">
    <citation type="journal article" date="2004" name="Genome Res.">
        <title>The status, quality, and expansion of the NIH full-length cDNA project: the Mammalian Gene Collection (MGC).</title>
        <authorList>
            <consortium name="The MGC Project Team"/>
        </authorList>
    </citation>
    <scope>NUCLEOTIDE SEQUENCE [LARGE SCALE MRNA]</scope>
    <source>
        <strain>Brown Norway</strain>
        <tissue>Kidney</tissue>
    </source>
</reference>